<proteinExistence type="inferred from homology"/>
<reference key="1">
    <citation type="journal article" date="2015" name="Genome Announc.">
        <title>Draft genome sequence of the cellulolytic fungus Chaetomium globosum.</title>
        <authorList>
            <person name="Cuomo C.A."/>
            <person name="Untereiner W.A."/>
            <person name="Ma L.-J."/>
            <person name="Grabherr M."/>
            <person name="Birren B.W."/>
        </authorList>
    </citation>
    <scope>NUCLEOTIDE SEQUENCE [LARGE SCALE GENOMIC DNA]</scope>
    <source>
        <strain>ATCC 6205 / CBS 148.51 / DSM 1962 / NBRC 6347 / NRRL 1970</strain>
    </source>
</reference>
<keyword id="KW-0067">ATP-binding</keyword>
<keyword id="KW-0347">Helicase</keyword>
<keyword id="KW-0378">Hydrolase</keyword>
<keyword id="KW-0547">Nucleotide-binding</keyword>
<keyword id="KW-0539">Nucleus</keyword>
<keyword id="KW-1185">Reference proteome</keyword>
<keyword id="KW-0690">Ribosome biogenesis</keyword>
<keyword id="KW-0694">RNA-binding</keyword>
<protein>
    <recommendedName>
        <fullName>ATP-dependent RNA helicase DRS1</fullName>
        <ecNumber>3.6.4.13</ecNumber>
    </recommendedName>
</protein>
<name>DRS1_CHAGB</name>
<dbReference type="EC" id="3.6.4.13"/>
<dbReference type="EMBL" id="CH408030">
    <property type="protein sequence ID" value="EAQ91459.1"/>
    <property type="status" value="ALT_SEQ"/>
    <property type="molecule type" value="Genomic_DNA"/>
</dbReference>
<dbReference type="RefSeq" id="XP_001229910.1">
    <property type="nucleotide sequence ID" value="XM_001229909.1"/>
</dbReference>
<dbReference type="SMR" id="P0C2N7"/>
<dbReference type="FunCoup" id="P0C2N7">
    <property type="interactions" value="770"/>
</dbReference>
<dbReference type="STRING" id="306901.P0C2N7"/>
<dbReference type="GeneID" id="4389883"/>
<dbReference type="VEuPathDB" id="FungiDB:CHGG_03394"/>
<dbReference type="eggNOG" id="KOG0338">
    <property type="taxonomic scope" value="Eukaryota"/>
</dbReference>
<dbReference type="HOGENOM" id="CLU_002022_1_0_1"/>
<dbReference type="InParanoid" id="P0C2N7"/>
<dbReference type="OrthoDB" id="10259843at2759"/>
<dbReference type="Proteomes" id="UP000001056">
    <property type="component" value="Unassembled WGS sequence"/>
</dbReference>
<dbReference type="GO" id="GO:0005829">
    <property type="term" value="C:cytosol"/>
    <property type="evidence" value="ECO:0007669"/>
    <property type="project" value="TreeGrafter"/>
</dbReference>
<dbReference type="GO" id="GO:0005730">
    <property type="term" value="C:nucleolus"/>
    <property type="evidence" value="ECO:0007669"/>
    <property type="project" value="UniProtKB-SubCell"/>
</dbReference>
<dbReference type="GO" id="GO:0005524">
    <property type="term" value="F:ATP binding"/>
    <property type="evidence" value="ECO:0007669"/>
    <property type="project" value="UniProtKB-KW"/>
</dbReference>
<dbReference type="GO" id="GO:0016887">
    <property type="term" value="F:ATP hydrolysis activity"/>
    <property type="evidence" value="ECO:0007669"/>
    <property type="project" value="RHEA"/>
</dbReference>
<dbReference type="GO" id="GO:0003723">
    <property type="term" value="F:RNA binding"/>
    <property type="evidence" value="ECO:0007669"/>
    <property type="project" value="UniProtKB-KW"/>
</dbReference>
<dbReference type="GO" id="GO:0003724">
    <property type="term" value="F:RNA helicase activity"/>
    <property type="evidence" value="ECO:0007669"/>
    <property type="project" value="UniProtKB-EC"/>
</dbReference>
<dbReference type="GO" id="GO:0010467">
    <property type="term" value="P:gene expression"/>
    <property type="evidence" value="ECO:0007669"/>
    <property type="project" value="UniProtKB-ARBA"/>
</dbReference>
<dbReference type="GO" id="GO:0042254">
    <property type="term" value="P:ribosome biogenesis"/>
    <property type="evidence" value="ECO:0007669"/>
    <property type="project" value="UniProtKB-KW"/>
</dbReference>
<dbReference type="CDD" id="cd17947">
    <property type="entry name" value="DEADc_DDX27"/>
    <property type="match status" value="1"/>
</dbReference>
<dbReference type="CDD" id="cd18787">
    <property type="entry name" value="SF2_C_DEAD"/>
    <property type="match status" value="1"/>
</dbReference>
<dbReference type="Gene3D" id="3.40.50.300">
    <property type="entry name" value="P-loop containing nucleotide triphosphate hydrolases"/>
    <property type="match status" value="2"/>
</dbReference>
<dbReference type="InterPro" id="IPR011545">
    <property type="entry name" value="DEAD/DEAH_box_helicase_dom"/>
</dbReference>
<dbReference type="InterPro" id="IPR050079">
    <property type="entry name" value="DEAD_box_RNA_helicase"/>
</dbReference>
<dbReference type="InterPro" id="IPR014001">
    <property type="entry name" value="Helicase_ATP-bd"/>
</dbReference>
<dbReference type="InterPro" id="IPR001650">
    <property type="entry name" value="Helicase_C-like"/>
</dbReference>
<dbReference type="InterPro" id="IPR027417">
    <property type="entry name" value="P-loop_NTPase"/>
</dbReference>
<dbReference type="InterPro" id="IPR000629">
    <property type="entry name" value="RNA-helicase_DEAD-box_CS"/>
</dbReference>
<dbReference type="InterPro" id="IPR014014">
    <property type="entry name" value="RNA_helicase_DEAD_Q_motif"/>
</dbReference>
<dbReference type="PANTHER" id="PTHR47959:SF1">
    <property type="entry name" value="ATP-DEPENDENT RNA HELICASE DBPA"/>
    <property type="match status" value="1"/>
</dbReference>
<dbReference type="PANTHER" id="PTHR47959">
    <property type="entry name" value="ATP-DEPENDENT RNA HELICASE RHLE-RELATED"/>
    <property type="match status" value="1"/>
</dbReference>
<dbReference type="Pfam" id="PF00270">
    <property type="entry name" value="DEAD"/>
    <property type="match status" value="1"/>
</dbReference>
<dbReference type="Pfam" id="PF00271">
    <property type="entry name" value="Helicase_C"/>
    <property type="match status" value="1"/>
</dbReference>
<dbReference type="SMART" id="SM00487">
    <property type="entry name" value="DEXDc"/>
    <property type="match status" value="1"/>
</dbReference>
<dbReference type="SMART" id="SM00490">
    <property type="entry name" value="HELICc"/>
    <property type="match status" value="1"/>
</dbReference>
<dbReference type="SUPFAM" id="SSF52540">
    <property type="entry name" value="P-loop containing nucleoside triphosphate hydrolases"/>
    <property type="match status" value="2"/>
</dbReference>
<dbReference type="PROSITE" id="PS00039">
    <property type="entry name" value="DEAD_ATP_HELICASE"/>
    <property type="match status" value="1"/>
</dbReference>
<dbReference type="PROSITE" id="PS51192">
    <property type="entry name" value="HELICASE_ATP_BIND_1"/>
    <property type="match status" value="1"/>
</dbReference>
<dbReference type="PROSITE" id="PS51194">
    <property type="entry name" value="HELICASE_CTER"/>
    <property type="match status" value="1"/>
</dbReference>
<dbReference type="PROSITE" id="PS51195">
    <property type="entry name" value="Q_MOTIF"/>
    <property type="match status" value="1"/>
</dbReference>
<organism>
    <name type="scientific">Chaetomium globosum (strain ATCC 6205 / CBS 148.51 / DSM 1962 / NBRC 6347 / NRRL 1970)</name>
    <name type="common">Soil fungus</name>
    <dbReference type="NCBI Taxonomy" id="306901"/>
    <lineage>
        <taxon>Eukaryota</taxon>
        <taxon>Fungi</taxon>
        <taxon>Dikarya</taxon>
        <taxon>Ascomycota</taxon>
        <taxon>Pezizomycotina</taxon>
        <taxon>Sordariomycetes</taxon>
        <taxon>Sordariomycetidae</taxon>
        <taxon>Sordariales</taxon>
        <taxon>Chaetomiaceae</taxon>
        <taxon>Chaetomium</taxon>
    </lineage>
</organism>
<comment type="function">
    <text evidence="1">ATP-binding RNA helicase involved in ribosome assembly.</text>
</comment>
<comment type="catalytic activity">
    <reaction>
        <text>ATP + H2O = ADP + phosphate + H(+)</text>
        <dbReference type="Rhea" id="RHEA:13065"/>
        <dbReference type="ChEBI" id="CHEBI:15377"/>
        <dbReference type="ChEBI" id="CHEBI:15378"/>
        <dbReference type="ChEBI" id="CHEBI:30616"/>
        <dbReference type="ChEBI" id="CHEBI:43474"/>
        <dbReference type="ChEBI" id="CHEBI:456216"/>
        <dbReference type="EC" id="3.6.4.13"/>
    </reaction>
</comment>
<comment type="subunit">
    <text evidence="1">Associates with pre-ribosomal particles.</text>
</comment>
<comment type="subcellular location">
    <subcellularLocation>
        <location evidence="1">Nucleus</location>
        <location evidence="1">Nucleolus</location>
    </subcellularLocation>
</comment>
<comment type="domain">
    <text>The Q motif is unique to and characteristic of the DEAD box family of RNA helicases and controls ATP binding and hydrolysis.</text>
</comment>
<comment type="similarity">
    <text evidence="4">Belongs to the DEAD box helicase family. DDX27/DRS1 subfamily.</text>
</comment>
<comment type="sequence caution" evidence="4">
    <conflict type="erroneous gene model prediction">
        <sequence resource="EMBL-CDS" id="EAQ91459"/>
    </conflict>
</comment>
<accession>P0C2N7</accession>
<accession>Q2H8R0</accession>
<gene>
    <name type="primary">DRS1</name>
    <name type="ORF">CHGG_03394</name>
</gene>
<evidence type="ECO:0000250" key="1"/>
<evidence type="ECO:0000255" key="2">
    <source>
        <dbReference type="PROSITE-ProRule" id="PRU00541"/>
    </source>
</evidence>
<evidence type="ECO:0000256" key="3">
    <source>
        <dbReference type="SAM" id="MobiDB-lite"/>
    </source>
</evidence>
<evidence type="ECO:0000305" key="4"/>
<sequence>MAPSQKRKSLPDDDFIHTISDNDEPDILDEEEETVPAAVAGRPNKKARTAGAGAVKGKKNKKEKKGKKGGKSAAAGGDGEDGDEEEEEEVTGLWGANDADDGAMDSDFEFVAGGGGEDGLSGFDEEGWGFENAKKGVVGAGGAGQEVKSGVDLDEIIRRRREKKKGKGLEKVEEEEVEVEDMGEVDLDLDDEVLAEDGFGMGMEDGEGGVDEEDKGGEDDDEAASDNDSVATPVQHPDDEASEDDDEEDAEEEARRKEFFAAPEETENVGKKGGLSSFQGMSLSRPILRGLTSVGFTKPTPIQAKTIPIALMGKDVVGGAVTGSGKTAAFVVPILERLLYRPKKVPTTRVVVLTPTRELAIQCHSVATKLASHTDIKFCLAVGGLSLKVQEGELRLRPDVVIATPGRFIDHMRNSASFAVETVEILVLDEADRMLEDGFADELNEILTTLPKSRQTMLFSATMTSTVDKLIRVGLNKPARIMVDSQKQTAVTLAQEFVRLRPGREEKRMGYLGPYLQDPVHRTSHYLLQAEEDCSPDPDHLRLAGAFEHRAPWKHEPGSAFRDGKVNYLLATDLASRGLDIKGIDTVINYEAPQSLEIYVHRVGRTARAGRSGVAITLAAEPDRKVVKAAVRAGKAQGAKIISRVIDAADADKWQDQIDEMDDEIDEILQEEKEEKQLAQIEMQVKKGENLIKHEEEIHARPKRTWFETQEDKKKAKELGRAELNGVRDAMKKKGAGRLSNKDKKKLDSKAERSESKSTGWKKGRAERDGKGAVLNLKKVTKPKSKAPAGRKGRR</sequence>
<feature type="chain" id="PRO_0000282492" description="ATP-dependent RNA helicase DRS1">
    <location>
        <begin position="1"/>
        <end position="795"/>
    </location>
</feature>
<feature type="domain" description="Helicase ATP-binding" evidence="2">
    <location>
        <begin position="307"/>
        <end position="481"/>
    </location>
</feature>
<feature type="domain" description="Helicase C-terminal">
    <location>
        <begin position="466"/>
        <end position="684"/>
    </location>
</feature>
<feature type="region of interest" description="Disordered" evidence="3">
    <location>
        <begin position="1"/>
        <end position="127"/>
    </location>
</feature>
<feature type="region of interest" description="Disordered" evidence="3">
    <location>
        <begin position="162"/>
        <end position="276"/>
    </location>
</feature>
<feature type="region of interest" description="Disordered" evidence="3">
    <location>
        <begin position="703"/>
        <end position="795"/>
    </location>
</feature>
<feature type="short sequence motif" description="Q motif">
    <location>
        <begin position="276"/>
        <end position="304"/>
    </location>
</feature>
<feature type="short sequence motif" description="DEAD box">
    <location>
        <begin position="429"/>
        <end position="432"/>
    </location>
</feature>
<feature type="compositionally biased region" description="Acidic residues" evidence="3">
    <location>
        <begin position="21"/>
        <end position="34"/>
    </location>
</feature>
<feature type="compositionally biased region" description="Basic residues" evidence="3">
    <location>
        <begin position="56"/>
        <end position="70"/>
    </location>
</feature>
<feature type="compositionally biased region" description="Acidic residues" evidence="3">
    <location>
        <begin position="78"/>
        <end position="90"/>
    </location>
</feature>
<feature type="compositionally biased region" description="Acidic residues" evidence="3">
    <location>
        <begin position="98"/>
        <end position="108"/>
    </location>
</feature>
<feature type="compositionally biased region" description="Acidic residues" evidence="3">
    <location>
        <begin position="172"/>
        <end position="195"/>
    </location>
</feature>
<feature type="compositionally biased region" description="Acidic residues" evidence="3">
    <location>
        <begin position="204"/>
        <end position="225"/>
    </location>
</feature>
<feature type="compositionally biased region" description="Acidic residues" evidence="3">
    <location>
        <begin position="240"/>
        <end position="252"/>
    </location>
</feature>
<feature type="compositionally biased region" description="Basic and acidic residues" evidence="3">
    <location>
        <begin position="710"/>
        <end position="721"/>
    </location>
</feature>
<feature type="compositionally biased region" description="Basic and acidic residues" evidence="3">
    <location>
        <begin position="740"/>
        <end position="756"/>
    </location>
</feature>
<feature type="compositionally biased region" description="Basic residues" evidence="3">
    <location>
        <begin position="779"/>
        <end position="795"/>
    </location>
</feature>
<feature type="binding site" evidence="2">
    <location>
        <begin position="320"/>
        <end position="327"/>
    </location>
    <ligand>
        <name>ATP</name>
        <dbReference type="ChEBI" id="CHEBI:30616"/>
    </ligand>
</feature>